<reference key="1">
    <citation type="journal article" date="2002" name="Nat. Genet.">
        <title>Genome sequence of the endocellular obligate symbiont of tsetse flies, Wigglesworthia glossinidia.</title>
        <authorList>
            <person name="Akman L."/>
            <person name="Yamashita A."/>
            <person name="Watanabe H."/>
            <person name="Oshima K."/>
            <person name="Shiba T."/>
            <person name="Hattori M."/>
            <person name="Aksoy S."/>
        </authorList>
    </citation>
    <scope>NUCLEOTIDE SEQUENCE [LARGE SCALE GENOMIC DNA]</scope>
</reference>
<proteinExistence type="inferred from homology"/>
<name>YIDC_WIGBR</name>
<comment type="function">
    <text evidence="1">Required for the insertion and/or proper folding and/or complex formation of integral membrane proteins into the membrane. Involved in integration of membrane proteins that insert both dependently and independently of the Sec translocase complex, as well as at least some lipoproteins. Aids folding of multispanning membrane proteins.</text>
</comment>
<comment type="subunit">
    <text evidence="1">Interacts with the Sec translocase complex via SecD. Specifically interacts with transmembrane segments of nascent integral membrane proteins during membrane integration.</text>
</comment>
<comment type="subcellular location">
    <subcellularLocation>
        <location evidence="1">Cell membrane</location>
        <topology evidence="1">Multi-pass membrane protein</topology>
    </subcellularLocation>
</comment>
<comment type="similarity">
    <text evidence="1">Belongs to the OXA1/ALB3/YidC family. Type 1 subfamily.</text>
</comment>
<dbReference type="EMBL" id="BA000021">
    <property type="protein sequence ID" value="BAC24159.1"/>
    <property type="molecule type" value="Genomic_DNA"/>
</dbReference>
<dbReference type="SMR" id="Q8D3I8"/>
<dbReference type="STRING" id="36870.gene:10368491"/>
<dbReference type="KEGG" id="wbr:yidC"/>
<dbReference type="eggNOG" id="COG0706">
    <property type="taxonomic scope" value="Bacteria"/>
</dbReference>
<dbReference type="HOGENOM" id="CLU_016535_3_0_6"/>
<dbReference type="OrthoDB" id="9780552at2"/>
<dbReference type="Proteomes" id="UP000000562">
    <property type="component" value="Chromosome"/>
</dbReference>
<dbReference type="GO" id="GO:0005886">
    <property type="term" value="C:plasma membrane"/>
    <property type="evidence" value="ECO:0007669"/>
    <property type="project" value="UniProtKB-SubCell"/>
</dbReference>
<dbReference type="GO" id="GO:0032977">
    <property type="term" value="F:membrane insertase activity"/>
    <property type="evidence" value="ECO:0007669"/>
    <property type="project" value="InterPro"/>
</dbReference>
<dbReference type="GO" id="GO:0051205">
    <property type="term" value="P:protein insertion into membrane"/>
    <property type="evidence" value="ECO:0007669"/>
    <property type="project" value="TreeGrafter"/>
</dbReference>
<dbReference type="GO" id="GO:0015031">
    <property type="term" value="P:protein transport"/>
    <property type="evidence" value="ECO:0007669"/>
    <property type="project" value="UniProtKB-KW"/>
</dbReference>
<dbReference type="CDD" id="cd20070">
    <property type="entry name" value="5TM_YidC_Alb3"/>
    <property type="match status" value="1"/>
</dbReference>
<dbReference type="CDD" id="cd19961">
    <property type="entry name" value="EcYidC-like_peri"/>
    <property type="match status" value="1"/>
</dbReference>
<dbReference type="Gene3D" id="2.70.98.90">
    <property type="match status" value="1"/>
</dbReference>
<dbReference type="HAMAP" id="MF_01810">
    <property type="entry name" value="YidC_type1"/>
    <property type="match status" value="1"/>
</dbReference>
<dbReference type="InterPro" id="IPR019998">
    <property type="entry name" value="Membr_insert_YidC"/>
</dbReference>
<dbReference type="InterPro" id="IPR028053">
    <property type="entry name" value="Membr_insert_YidC_N"/>
</dbReference>
<dbReference type="InterPro" id="IPR001708">
    <property type="entry name" value="YidC/ALB3/OXA1/COX18"/>
</dbReference>
<dbReference type="InterPro" id="IPR028055">
    <property type="entry name" value="YidC/Oxa/ALB_C"/>
</dbReference>
<dbReference type="InterPro" id="IPR047196">
    <property type="entry name" value="YidC_ALB_C"/>
</dbReference>
<dbReference type="InterPro" id="IPR038221">
    <property type="entry name" value="YidC_periplasmic_sf"/>
</dbReference>
<dbReference type="NCBIfam" id="NF002352">
    <property type="entry name" value="PRK01318.1-3"/>
    <property type="match status" value="1"/>
</dbReference>
<dbReference type="NCBIfam" id="TIGR03593">
    <property type="entry name" value="yidC_nterm"/>
    <property type="match status" value="1"/>
</dbReference>
<dbReference type="NCBIfam" id="TIGR03592">
    <property type="entry name" value="yidC_oxa1_cterm"/>
    <property type="match status" value="1"/>
</dbReference>
<dbReference type="PANTHER" id="PTHR12428:SF65">
    <property type="entry name" value="CYTOCHROME C OXIDASE ASSEMBLY PROTEIN COX18, MITOCHONDRIAL"/>
    <property type="match status" value="1"/>
</dbReference>
<dbReference type="PANTHER" id="PTHR12428">
    <property type="entry name" value="OXA1"/>
    <property type="match status" value="1"/>
</dbReference>
<dbReference type="Pfam" id="PF02096">
    <property type="entry name" value="60KD_IMP"/>
    <property type="match status" value="1"/>
</dbReference>
<dbReference type="Pfam" id="PF14849">
    <property type="entry name" value="YidC_periplas"/>
    <property type="match status" value="1"/>
</dbReference>
<dbReference type="PRINTS" id="PR00701">
    <property type="entry name" value="60KDINNERMP"/>
</dbReference>
<dbReference type="PRINTS" id="PR01900">
    <property type="entry name" value="YIDCPROTEIN"/>
</dbReference>
<organism>
    <name type="scientific">Wigglesworthia glossinidia brevipalpis</name>
    <dbReference type="NCBI Taxonomy" id="36870"/>
    <lineage>
        <taxon>Bacteria</taxon>
        <taxon>Pseudomonadati</taxon>
        <taxon>Pseudomonadota</taxon>
        <taxon>Gammaproteobacteria</taxon>
        <taxon>Enterobacterales</taxon>
        <taxon>Erwiniaceae</taxon>
        <taxon>Wigglesworthia</taxon>
    </lineage>
</organism>
<gene>
    <name evidence="1" type="primary">yidC</name>
    <name type="ordered locus">WIGBR0130</name>
</gene>
<sequence>MVVQNNFLFIAFIFVTFMMLDAWQSESYDYKSLDKNHIIEKKNIENKNINKEVFSRENYITVITDLFILKINTYGGDIEEASLRTYLSNTKNNLPLKILDRSKNFIYKLKSGFITKNDHDINNLIHIPNFISDKKLYILEDNSDYLQVPLFYNGENGLKYVKNFIFKKNSFSLKINYSIKNTNKDKMEMMFFGQLEQSIKDQEINNGYNFNFHTYRGAAYSSDNNKYKKYDFSEISNDKNLNVITSNGWIAMLQQYFIVAWIPKIENKYKFYTKNIPKDEKVSIGFQSELFSIDQEEEKNIESTLWIGPKLQDKMYEVDANLGLTVDYGWLWFIAQPLLQLLKFIYKYINNWGISIIIITFMVRGIMFPLTKAQYTSMAKMRILQPKIIEIKNKFSNDKKRQSKEMMSLYKKQKVNPLGGCMPLIIQMPIFLALYYMLSGSVELRHAHFVLWINDLSSKDPYYILPIIMGITMFLIQKISPSSISDPVQKKIVSFMPLIFTIFFLWFPSGLVLYYIISNLVTIIQQYIIYKDLKKVGILI</sequence>
<accession>Q8D3I8</accession>
<evidence type="ECO:0000255" key="1">
    <source>
        <dbReference type="HAMAP-Rule" id="MF_01810"/>
    </source>
</evidence>
<keyword id="KW-1003">Cell membrane</keyword>
<keyword id="KW-0143">Chaperone</keyword>
<keyword id="KW-0472">Membrane</keyword>
<keyword id="KW-0653">Protein transport</keyword>
<keyword id="KW-1185">Reference proteome</keyword>
<keyword id="KW-0812">Transmembrane</keyword>
<keyword id="KW-1133">Transmembrane helix</keyword>
<keyword id="KW-0813">Transport</keyword>
<protein>
    <recommendedName>
        <fullName evidence="1">Membrane protein insertase YidC</fullName>
    </recommendedName>
    <alternativeName>
        <fullName evidence="1">Foldase YidC</fullName>
    </alternativeName>
    <alternativeName>
        <fullName evidence="1">Membrane integrase YidC</fullName>
    </alternativeName>
    <alternativeName>
        <fullName evidence="1">Membrane protein YidC</fullName>
    </alternativeName>
</protein>
<feature type="chain" id="PRO_0000124769" description="Membrane protein insertase YidC">
    <location>
        <begin position="1"/>
        <end position="540"/>
    </location>
</feature>
<feature type="transmembrane region" description="Helical" evidence="1">
    <location>
        <begin position="1"/>
        <end position="21"/>
    </location>
</feature>
<feature type="transmembrane region" description="Helical" evidence="1">
    <location>
        <begin position="351"/>
        <end position="371"/>
    </location>
</feature>
<feature type="transmembrane region" description="Helical" evidence="1">
    <location>
        <begin position="418"/>
        <end position="438"/>
    </location>
</feature>
<feature type="transmembrane region" description="Helical" evidence="1">
    <location>
        <begin position="464"/>
        <end position="484"/>
    </location>
</feature>
<feature type="transmembrane region" description="Helical" evidence="1">
    <location>
        <begin position="497"/>
        <end position="517"/>
    </location>
</feature>